<sequence>MDMEEKPKYGEPRKFDPSFKGPIQNRGCTDIVCCIIFIIAILGYLAVGILAWTHGDPRKVIYPTDSMGQFCGQGKLEKQPFLFYFNMMKCASPMVLLEFQCPTPQVCVQTCPNRTMTLITAISKPQDWEYYKSYCKEDPGHKAAAQILKEKLCPAYLVSSNPFLQRCFPSMGKKGEVITVGDQEKFSDGVNVLDAKDLMAGMKNASIVMEGRQVAMKIFEDYTKSWYWILICLLIAVVLSLIFIVLLRFLAGVMVWVMILMVVAVIAYGIAHCSIKYVSLKDTPGSNITLQQLGFQPDFAVYLHIRQTWLAFIIILAILELIIILLLIFLRNRIRVAVELMKEASRAIGYVMSSLVFPIFTFFLLAIVIAFWGVNAVFLSTSSEPVYKVFNETECVHSRETCNPENFTSSSMKSDCPHSQCLFAFYGGETPYHKYLILLQFYNVFLFFWCANFVTALGQMTLAGAFASYYWAFDKSKDMPAFPLCASLGRSLRYHTGSLAFGSLLLAIVQVIRVLLEYIDHKLKGAENKFAKFLLCCLKCCFWCLEKFIKFINRNAYIMVAIYGKNFCRSARDAFFLLMRNVVRVVVLDKVTDFILFLGKLLIVGLVGIFAFFFFSGQTDAFKGTAPSLHYYWVPILTVLVCSYLIAHGFFSVYAMCVDTLFLCFLEDLERNDGSAERPYLMSENLLNVLKKKNQAN</sequence>
<name>CTL2_DANRE</name>
<keyword id="KW-0050">Antiport</keyword>
<keyword id="KW-1003">Cell membrane</keyword>
<keyword id="KW-0325">Glycoprotein</keyword>
<keyword id="KW-0472">Membrane</keyword>
<keyword id="KW-0496">Mitochondrion</keyword>
<keyword id="KW-1000">Mitochondrion outer membrane</keyword>
<keyword id="KW-0597">Phosphoprotein</keyword>
<keyword id="KW-1185">Reference proteome</keyword>
<keyword id="KW-0812">Transmembrane</keyword>
<keyword id="KW-1133">Transmembrane helix</keyword>
<keyword id="KW-0813">Transport</keyword>
<proteinExistence type="evidence at transcript level"/>
<reference key="1">
    <citation type="submission" date="2003-07" db="EMBL/GenBank/DDBJ databases">
        <authorList>
            <consortium name="NIH - Zebrafish Gene Collection (ZGC) project"/>
        </authorList>
    </citation>
    <scope>NUCLEOTIDE SEQUENCE [LARGE SCALE MRNA]</scope>
    <source>
        <strain>AB</strain>
    </source>
</reference>
<gene>
    <name type="primary">slc44a2</name>
    <name type="synonym">ctl2</name>
    <name type="ORF">zgc:63569</name>
</gene>
<comment type="function">
    <text evidence="2">Choline/H+ antiporter, mainly in mitochodria. Also acts as a low-affinity ethanolamine/H+ antiporter, regulating the supply of extracellular ethanolamine (Etn) for the CDP-Etn pathway, redistribute intracellular Etn and balance the CDP-Cho and CDP-Etn arms of the Kennedy pathway.</text>
</comment>
<comment type="catalytic activity">
    <reaction evidence="2">
        <text>choline(out) + n H(+)(in) = choline(in) + n H(+)(out)</text>
        <dbReference type="Rhea" id="RHEA:75463"/>
        <dbReference type="ChEBI" id="CHEBI:15354"/>
        <dbReference type="ChEBI" id="CHEBI:15378"/>
    </reaction>
</comment>
<comment type="catalytic activity">
    <reaction evidence="2">
        <text>ethanolamine(out) + n H(+)(in) = ethanolamine(in) + n H(+)(out)</text>
        <dbReference type="Rhea" id="RHEA:75467"/>
        <dbReference type="ChEBI" id="CHEBI:15378"/>
        <dbReference type="ChEBI" id="CHEBI:57603"/>
    </reaction>
</comment>
<comment type="subcellular location">
    <subcellularLocation>
        <location evidence="2">Cell membrane</location>
        <topology evidence="3">Multi-pass membrane protein</topology>
    </subcellularLocation>
    <subcellularLocation>
        <location evidence="2">Mitochondrion outer membrane</location>
        <topology evidence="3">Multi-pass membrane protein</topology>
    </subcellularLocation>
    <text evidence="1">Mainly expressed in mitochondria.</text>
</comment>
<comment type="similarity">
    <text evidence="4">Belongs to the CTL (choline transporter-like) family.</text>
</comment>
<organism>
    <name type="scientific">Danio rerio</name>
    <name type="common">Zebrafish</name>
    <name type="synonym">Brachydanio rerio</name>
    <dbReference type="NCBI Taxonomy" id="7955"/>
    <lineage>
        <taxon>Eukaryota</taxon>
        <taxon>Metazoa</taxon>
        <taxon>Chordata</taxon>
        <taxon>Craniata</taxon>
        <taxon>Vertebrata</taxon>
        <taxon>Euteleostomi</taxon>
        <taxon>Actinopterygii</taxon>
        <taxon>Neopterygii</taxon>
        <taxon>Teleostei</taxon>
        <taxon>Ostariophysi</taxon>
        <taxon>Cypriniformes</taxon>
        <taxon>Danionidae</taxon>
        <taxon>Danioninae</taxon>
        <taxon>Danio</taxon>
    </lineage>
</organism>
<feature type="chain" id="PRO_0000359716" description="Choline transporter-like protein 2">
    <location>
        <begin position="1"/>
        <end position="697"/>
    </location>
</feature>
<feature type="topological domain" description="Cytoplasmic" evidence="3">
    <location>
        <begin position="1"/>
        <end position="30"/>
    </location>
</feature>
<feature type="transmembrane region" description="Helical" evidence="3">
    <location>
        <begin position="31"/>
        <end position="51"/>
    </location>
</feature>
<feature type="topological domain" description="Extracellular" evidence="3">
    <location>
        <begin position="52"/>
        <end position="226"/>
    </location>
</feature>
<feature type="transmembrane region" description="Helical" evidence="3">
    <location>
        <begin position="227"/>
        <end position="247"/>
    </location>
</feature>
<feature type="topological domain" description="Cytoplasmic" evidence="3">
    <location>
        <begin position="248"/>
        <end position="249"/>
    </location>
</feature>
<feature type="transmembrane region" description="Helical" evidence="3">
    <location>
        <begin position="250"/>
        <end position="270"/>
    </location>
</feature>
<feature type="topological domain" description="Extracellular" evidence="3">
    <location>
        <begin position="271"/>
        <end position="309"/>
    </location>
</feature>
<feature type="transmembrane region" description="Helical" evidence="3">
    <location>
        <begin position="310"/>
        <end position="330"/>
    </location>
</feature>
<feature type="topological domain" description="Cytoplasmic" evidence="3">
    <location>
        <begin position="331"/>
        <end position="353"/>
    </location>
</feature>
<feature type="transmembrane region" description="Helical" evidence="3">
    <location>
        <begin position="354"/>
        <end position="374"/>
    </location>
</feature>
<feature type="topological domain" description="Extracellular" evidence="3">
    <location>
        <begin position="375"/>
        <end position="435"/>
    </location>
</feature>
<feature type="transmembrane region" description="Helical" evidence="3">
    <location>
        <begin position="436"/>
        <end position="456"/>
    </location>
</feature>
<feature type="topological domain" description="Cytoplasmic" evidence="3">
    <location>
        <begin position="457"/>
        <end position="498"/>
    </location>
</feature>
<feature type="transmembrane region" description="Helical" evidence="3">
    <location>
        <begin position="499"/>
        <end position="519"/>
    </location>
</feature>
<feature type="topological domain" description="Extracellular" evidence="3">
    <location>
        <begin position="520"/>
        <end position="593"/>
    </location>
</feature>
<feature type="transmembrane region" description="Helical" evidence="3">
    <location>
        <begin position="594"/>
        <end position="614"/>
    </location>
</feature>
<feature type="topological domain" description="Cytoplasmic" evidence="3">
    <location>
        <begin position="615"/>
        <end position="632"/>
    </location>
</feature>
<feature type="transmembrane region" description="Helical" evidence="3">
    <location>
        <begin position="633"/>
        <end position="653"/>
    </location>
</feature>
<feature type="topological domain" description="Extracellular" evidence="3">
    <location>
        <begin position="654"/>
        <end position="697"/>
    </location>
</feature>
<feature type="glycosylation site" description="N-linked (GlcNAc...) asparagine" evidence="3">
    <location>
        <position position="113"/>
    </location>
</feature>
<feature type="glycosylation site" description="N-linked (GlcNAc...) asparagine" evidence="3">
    <location>
        <position position="204"/>
    </location>
</feature>
<feature type="glycosylation site" description="N-linked (GlcNAc...) asparagine" evidence="3">
    <location>
        <position position="287"/>
    </location>
</feature>
<feature type="glycosylation site" description="N-linked (GlcNAc...) asparagine" evidence="3">
    <location>
        <position position="391"/>
    </location>
</feature>
<feature type="glycosylation site" description="N-linked (GlcNAc...) asparagine" evidence="3">
    <location>
        <position position="406"/>
    </location>
</feature>
<accession>Q7SYC9</accession>
<dbReference type="EMBL" id="BC054915">
    <property type="protein sequence ID" value="AAH54915.1"/>
    <property type="molecule type" value="mRNA"/>
</dbReference>
<dbReference type="RefSeq" id="NP_942572.1">
    <property type="nucleotide sequence ID" value="NM_198871.1"/>
</dbReference>
<dbReference type="SMR" id="Q7SYC9"/>
<dbReference type="FunCoup" id="Q7SYC9">
    <property type="interactions" value="1537"/>
</dbReference>
<dbReference type="STRING" id="7955.ENSDARP00000129979"/>
<dbReference type="GlyCosmos" id="Q7SYC9">
    <property type="glycosylation" value="5 sites, No reported glycans"/>
</dbReference>
<dbReference type="PaxDb" id="7955-ENSDARP00000023293"/>
<dbReference type="GeneID" id="321056"/>
<dbReference type="KEGG" id="dre:321056"/>
<dbReference type="AGR" id="ZFIN:ZDB-GENE-030131-9816"/>
<dbReference type="ZFIN" id="ZDB-GENE-030131-9816">
    <property type="gene designation" value="zgc:63569"/>
</dbReference>
<dbReference type="eggNOG" id="KOG1362">
    <property type="taxonomic scope" value="Eukaryota"/>
</dbReference>
<dbReference type="InParanoid" id="Q7SYC9"/>
<dbReference type="OrthoDB" id="420519at2759"/>
<dbReference type="PhylomeDB" id="Q7SYC9"/>
<dbReference type="Reactome" id="R-DRE-1483191">
    <property type="pathway name" value="Synthesis of PC"/>
</dbReference>
<dbReference type="Reactome" id="R-DRE-425366">
    <property type="pathway name" value="Transport of bile salts and organic acids, metal ions and amine compounds"/>
</dbReference>
<dbReference type="Reactome" id="R-DRE-6798695">
    <property type="pathway name" value="Neutrophil degranulation"/>
</dbReference>
<dbReference type="PRO" id="PR:Q7SYC9"/>
<dbReference type="Proteomes" id="UP000000437">
    <property type="component" value="Unplaced"/>
</dbReference>
<dbReference type="GO" id="GO:0016020">
    <property type="term" value="C:membrane"/>
    <property type="evidence" value="ECO:0000318"/>
    <property type="project" value="GO_Central"/>
</dbReference>
<dbReference type="GO" id="GO:0005741">
    <property type="term" value="C:mitochondrial outer membrane"/>
    <property type="evidence" value="ECO:0000250"/>
    <property type="project" value="UniProtKB"/>
</dbReference>
<dbReference type="GO" id="GO:0005886">
    <property type="term" value="C:plasma membrane"/>
    <property type="evidence" value="ECO:0000250"/>
    <property type="project" value="UniProtKB"/>
</dbReference>
<dbReference type="GO" id="GO:0015297">
    <property type="term" value="F:antiporter activity"/>
    <property type="evidence" value="ECO:0007669"/>
    <property type="project" value="UniProtKB-KW"/>
</dbReference>
<dbReference type="GO" id="GO:0015220">
    <property type="term" value="F:choline transmembrane transporter activity"/>
    <property type="evidence" value="ECO:0000250"/>
    <property type="project" value="UniProtKB"/>
</dbReference>
<dbReference type="GO" id="GO:0034228">
    <property type="term" value="F:ethanolamine transmembrane transporter activity"/>
    <property type="evidence" value="ECO:0000250"/>
    <property type="project" value="UniProtKB"/>
</dbReference>
<dbReference type="GO" id="GO:0022857">
    <property type="term" value="F:transmembrane transporter activity"/>
    <property type="evidence" value="ECO:0000318"/>
    <property type="project" value="GO_Central"/>
</dbReference>
<dbReference type="GO" id="GO:0015871">
    <property type="term" value="P:choline transport"/>
    <property type="evidence" value="ECO:0000250"/>
    <property type="project" value="UniProtKB"/>
</dbReference>
<dbReference type="GO" id="GO:0034229">
    <property type="term" value="P:ethanolamine transport"/>
    <property type="evidence" value="ECO:0000250"/>
    <property type="project" value="UniProtKB"/>
</dbReference>
<dbReference type="GO" id="GO:0055085">
    <property type="term" value="P:transmembrane transport"/>
    <property type="evidence" value="ECO:0000318"/>
    <property type="project" value="GO_Central"/>
</dbReference>
<dbReference type="InterPro" id="IPR007603">
    <property type="entry name" value="Choline_transptr-like"/>
</dbReference>
<dbReference type="PANTHER" id="PTHR12385">
    <property type="entry name" value="CHOLINE TRANSPORTER-LIKE (SLC FAMILY 44)"/>
    <property type="match status" value="1"/>
</dbReference>
<dbReference type="PANTHER" id="PTHR12385:SF34">
    <property type="entry name" value="CHOLINE TRANSPORTER-LIKE PROTEIN 2"/>
    <property type="match status" value="1"/>
</dbReference>
<dbReference type="Pfam" id="PF04515">
    <property type="entry name" value="Choline_transpo"/>
    <property type="match status" value="1"/>
</dbReference>
<evidence type="ECO:0000250" key="1">
    <source>
        <dbReference type="UniProtKB" id="B4F795"/>
    </source>
</evidence>
<evidence type="ECO:0000250" key="2">
    <source>
        <dbReference type="UniProtKB" id="Q8IWA5"/>
    </source>
</evidence>
<evidence type="ECO:0000255" key="3"/>
<evidence type="ECO:0000305" key="4"/>
<protein>
    <recommendedName>
        <fullName>Choline transporter-like protein 2</fullName>
    </recommendedName>
    <alternativeName>
        <fullName>Solute carrier family 44 member 2</fullName>
    </alternativeName>
</protein>